<feature type="initiator methionine" description="Removed">
    <location>
        <position position="1"/>
    </location>
</feature>
<feature type="chain" id="PRO_0000138379" description="UvrABC system protein B">
    <location>
        <begin position="2"/>
        <end position="658"/>
    </location>
</feature>
<feature type="domain" description="Helicase ATP-binding">
    <location>
        <begin position="27"/>
        <end position="414"/>
    </location>
</feature>
<feature type="domain" description="Helicase C-terminal">
    <location>
        <begin position="430"/>
        <end position="596"/>
    </location>
</feature>
<feature type="domain" description="UVR">
    <location>
        <begin position="622"/>
        <end position="657"/>
    </location>
</feature>
<feature type="short sequence motif" description="Beta-hairpin">
    <location>
        <begin position="93"/>
        <end position="116"/>
    </location>
</feature>
<feature type="binding site" evidence="2">
    <location>
        <begin position="40"/>
        <end position="47"/>
    </location>
    <ligand>
        <name>ATP</name>
        <dbReference type="ChEBI" id="CHEBI:30616"/>
    </ligand>
</feature>
<feature type="mutagenesis site" description="Inactive in incision, unable to form a stable complex with DNA." evidence="3">
    <original>QPEAYVPQTDTYIEKD</original>
    <variation>G</variation>
    <location>
        <begin position="98"/>
        <end position="113"/>
    </location>
</feature>
<feature type="helix" evidence="9">
    <location>
        <begin position="18"/>
        <end position="30"/>
    </location>
</feature>
<feature type="strand" evidence="9">
    <location>
        <begin position="35"/>
        <end position="40"/>
    </location>
</feature>
<feature type="helix" evidence="9">
    <location>
        <begin position="46"/>
        <end position="57"/>
    </location>
</feature>
<feature type="strand" evidence="9">
    <location>
        <begin position="61"/>
        <end position="67"/>
    </location>
</feature>
<feature type="helix" evidence="9">
    <location>
        <begin position="68"/>
        <end position="81"/>
    </location>
</feature>
<feature type="strand" evidence="9">
    <location>
        <begin position="85"/>
        <end position="90"/>
    </location>
</feature>
<feature type="helix" evidence="5">
    <location>
        <begin position="93"/>
        <end position="95"/>
    </location>
</feature>
<feature type="strand" evidence="5">
    <location>
        <begin position="96"/>
        <end position="98"/>
    </location>
</feature>
<feature type="strand" evidence="6">
    <location>
        <begin position="100"/>
        <end position="103"/>
    </location>
</feature>
<feature type="turn" evidence="5">
    <location>
        <begin position="104"/>
        <end position="107"/>
    </location>
</feature>
<feature type="strand" evidence="6">
    <location>
        <begin position="108"/>
        <end position="110"/>
    </location>
</feature>
<feature type="helix" evidence="9">
    <location>
        <begin position="115"/>
        <end position="131"/>
    </location>
</feature>
<feature type="strand" evidence="9">
    <location>
        <begin position="137"/>
        <end position="143"/>
    </location>
</feature>
<feature type="strand" evidence="7">
    <location>
        <begin position="147"/>
        <end position="149"/>
    </location>
</feature>
<feature type="helix" evidence="9">
    <location>
        <begin position="152"/>
        <end position="157"/>
    </location>
</feature>
<feature type="strand" evidence="9">
    <location>
        <begin position="160"/>
        <end position="163"/>
    </location>
</feature>
<feature type="helix" evidence="9">
    <location>
        <begin position="170"/>
        <end position="179"/>
    </location>
</feature>
<feature type="strand" evidence="5">
    <location>
        <begin position="183"/>
        <end position="185"/>
    </location>
</feature>
<feature type="strand" evidence="6">
    <location>
        <begin position="186"/>
        <end position="188"/>
    </location>
</feature>
<feature type="strand" evidence="9">
    <location>
        <begin position="192"/>
        <end position="196"/>
    </location>
</feature>
<feature type="strand" evidence="9">
    <location>
        <begin position="199"/>
        <end position="202"/>
    </location>
</feature>
<feature type="strand" evidence="9">
    <location>
        <begin position="208"/>
        <end position="228"/>
    </location>
</feature>
<feature type="turn" evidence="9">
    <location>
        <begin position="229"/>
        <end position="231"/>
    </location>
</feature>
<feature type="strand" evidence="9">
    <location>
        <begin position="234"/>
        <end position="237"/>
    </location>
</feature>
<feature type="strand" evidence="9">
    <location>
        <begin position="239"/>
        <end position="243"/>
    </location>
</feature>
<feature type="strand" evidence="5">
    <location>
        <begin position="246"/>
        <end position="249"/>
    </location>
</feature>
<feature type="helix" evidence="9">
    <location>
        <begin position="253"/>
        <end position="276"/>
    </location>
</feature>
<feature type="helix" evidence="9">
    <location>
        <begin position="280"/>
        <end position="299"/>
    </location>
</feature>
<feature type="helix" evidence="9">
    <location>
        <begin position="306"/>
        <end position="309"/>
    </location>
</feature>
<feature type="helix" evidence="9">
    <location>
        <begin position="310"/>
        <end position="313"/>
    </location>
</feature>
<feature type="helix" evidence="9">
    <location>
        <begin position="325"/>
        <end position="328"/>
    </location>
</feature>
<feature type="strand" evidence="9">
    <location>
        <begin position="334"/>
        <end position="338"/>
    </location>
</feature>
<feature type="helix" evidence="9">
    <location>
        <begin position="340"/>
        <end position="363"/>
    </location>
</feature>
<feature type="helix" evidence="9">
    <location>
        <begin position="369"/>
        <end position="373"/>
    </location>
</feature>
<feature type="helix" evidence="9">
    <location>
        <begin position="379"/>
        <end position="385"/>
    </location>
</feature>
<feature type="strand" evidence="9">
    <location>
        <begin position="387"/>
        <end position="395"/>
    </location>
</feature>
<feature type="helix" evidence="9">
    <location>
        <begin position="398"/>
        <end position="403"/>
    </location>
</feature>
<feature type="strand" evidence="9">
    <location>
        <begin position="404"/>
        <end position="406"/>
    </location>
</feature>
<feature type="strand" evidence="9">
    <location>
        <begin position="408"/>
        <end position="410"/>
    </location>
</feature>
<feature type="strand" evidence="9">
    <location>
        <begin position="421"/>
        <end position="425"/>
    </location>
</feature>
<feature type="helix" evidence="9">
    <location>
        <begin position="430"/>
        <end position="443"/>
    </location>
</feature>
<feature type="strand" evidence="9">
    <location>
        <begin position="447"/>
        <end position="451"/>
    </location>
</feature>
<feature type="helix" evidence="9">
    <location>
        <begin position="455"/>
        <end position="467"/>
    </location>
</feature>
<feature type="strand" evidence="9">
    <location>
        <begin position="472"/>
        <end position="474"/>
    </location>
</feature>
<feature type="helix" evidence="9">
    <location>
        <begin position="481"/>
        <end position="493"/>
    </location>
</feature>
<feature type="strand" evidence="9">
    <location>
        <begin position="497"/>
        <end position="506"/>
    </location>
</feature>
<feature type="strand" evidence="9">
    <location>
        <begin position="514"/>
        <end position="520"/>
    </location>
</feature>
<feature type="turn" evidence="9">
    <location>
        <begin position="521"/>
        <end position="523"/>
    </location>
</feature>
<feature type="helix" evidence="5">
    <location>
        <begin position="527"/>
        <end position="529"/>
    </location>
</feature>
<feature type="helix" evidence="9">
    <location>
        <begin position="531"/>
        <end position="538"/>
    </location>
</feature>
<feature type="helix" evidence="9">
    <location>
        <begin position="539"/>
        <end position="541"/>
    </location>
</feature>
<feature type="strand" evidence="8">
    <location>
        <begin position="542"/>
        <end position="544"/>
    </location>
</feature>
<feature type="strand" evidence="9">
    <location>
        <begin position="548"/>
        <end position="552"/>
    </location>
</feature>
<feature type="helix" evidence="9">
    <location>
        <begin position="558"/>
        <end position="581"/>
    </location>
</feature>
<gene>
    <name type="primary">uvrB</name>
</gene>
<keyword id="KW-0002">3D-structure</keyword>
<keyword id="KW-0067">ATP-binding</keyword>
<keyword id="KW-0963">Cytoplasm</keyword>
<keyword id="KW-0227">DNA damage</keyword>
<keyword id="KW-0228">DNA excision</keyword>
<keyword id="KW-0234">DNA repair</keyword>
<keyword id="KW-0267">Excision nuclease</keyword>
<keyword id="KW-0547">Nucleotide-binding</keyword>
<keyword id="KW-0742">SOS response</keyword>
<name>UVRB_BACCA</name>
<reference key="1">
    <citation type="journal article" date="1999" name="EMBO J.">
        <title>Crystal structure of UvrB, a DNA helicase adapted for nucleotide excision repair.</title>
        <authorList>
            <person name="Theis K."/>
            <person name="Chen P.J."/>
            <person name="Skorvaga M."/>
            <person name="Van Houten B."/>
            <person name="Kisker C."/>
        </authorList>
    </citation>
    <scope>X-RAY CRYSTALLOGRAPHY (2.6 ANGSTROMS)</scope>
</reference>
<reference key="2">
    <citation type="journal article" date="2002" name="J. Biol. Chem.">
        <title>The beta-hairpin motif of UvrB is essential for DNA binding, damage processing, and UvrC-mediated incisions.</title>
        <authorList>
            <person name="Skorvaga M."/>
            <person name="Theis K."/>
            <person name="Mandavilli B.S."/>
            <person name="Kisker C."/>
            <person name="Van Houten B."/>
        </authorList>
    </citation>
    <scope>IMPORTANCE OF THE BETA-HAIRPIN MOTIF</scope>
    <scope>MUTAGENESIS OF 98-GLN--ASP-113</scope>
</reference>
<sequence length="658" mass="75455">MVEGRFQLVAPYEPQGDQPQAIAKLVDGLRRGVKHQTLLGATGTGKTFTISNVIAQVNKPTLVIAHNKTLAGQLYSELKEFFPHNAVEYFVSYYDYYQPEAYVPQTDTYIEKDAKINDEIDKLRHSATSALFERRDVIIVASVSCIYGLGSPEEYRELVVSLRVGMEIERNALLRRLVDIQYDRNDIDFRGTFRVRGDVVEIFPASRDEHCIRVEFFGDEIERIREVDALTGKVLGEREHVAIFPASHFVTREEKMRLAIQNIEQELEERLAELRAQGKLLEAQRLEQRTRYDLEMMREMGFCSGIENYSRHLALRPPGSTPYTLLDYFPDDFLIIVDESHVTLPQLRGMYNGDRARKQVLVDHGFRLPSALDNRPLTFEEFEQKINQIIYVSATPGPYELEHSPGVVEQIIRPTGLLDPTIDVRPTKGQIDDLIGEIRERVERNERTLVTTLTKKMAEDLTDYLKEAGIKVAYLHSEIKTLERIEIIRDLRLGKYDVLVGINLLREGLDIPEVSLVAILDADKEGFLRSERSLIQTIGRAARNANGHVIMYADTITKSMEIAIQETKRRRAIQEEYNRKHGIVPRTVKKEIRDVIRATYAAEETEMYEAKPAAAMTKQEREELIRTLEAEMKEAAKALDFERAAQLRDIIFELKAEG</sequence>
<evidence type="ECO:0000250" key="1"/>
<evidence type="ECO:0000255" key="2"/>
<evidence type="ECO:0000269" key="3">
    <source>
    </source>
</evidence>
<evidence type="ECO:0000305" key="4"/>
<evidence type="ECO:0007829" key="5">
    <source>
        <dbReference type="PDB" id="1D9X"/>
    </source>
</evidence>
<evidence type="ECO:0007829" key="6">
    <source>
        <dbReference type="PDB" id="1T5L"/>
    </source>
</evidence>
<evidence type="ECO:0007829" key="7">
    <source>
        <dbReference type="PDB" id="2FDC"/>
    </source>
</evidence>
<evidence type="ECO:0007829" key="8">
    <source>
        <dbReference type="PDB" id="6O8G"/>
    </source>
</evidence>
<evidence type="ECO:0007829" key="9">
    <source>
        <dbReference type="PDB" id="6O8H"/>
    </source>
</evidence>
<comment type="function">
    <text evidence="1">The UvrABC repair system catalyzes the recognition and processing of DNA lesions. A damage recognition complex composed of 2 UvrA and 2 UvrB subunits scans DNA for abnormalities. Upon binding of the UvrA(2)B(2) complex to a putative damaged site, the DNA wraps around one UvrB monomer. DNA wrap is dependent on ATP binding by UvrB and probably causes local melting of the DNA helix, facilitating insertion of UvrB beta-hairpin between the DNA strands. Then UvrB probes one DNA strand for the presence of a lesion. If a lesion is found the UvrA subunits dissociate and the UvrB-DNA preincision complex is formed. This complex is subsequently bound by UvrC and the second UvrB is released. If no lesion is found, the DNA wraps around the other UvrB subunit that will check the other stand for damage (By similarity).</text>
</comment>
<comment type="cofactor">
    <cofactor>
        <name>Mg(2+)</name>
        <dbReference type="ChEBI" id="CHEBI:18420"/>
    </cofactor>
    <text>Binds 1 Mg(2+) ion per subunit.</text>
</comment>
<comment type="subunit">
    <text>Forms a heterotetramer with UvrA during the search for lesions. Interacts with UvrC in an incision complex.</text>
</comment>
<comment type="subcellular location">
    <subcellularLocation>
        <location evidence="1">Cytoplasm</location>
    </subcellularLocation>
</comment>
<comment type="domain">
    <text>The beta-hairpin motif is involved in DNA binding.</text>
</comment>
<comment type="similarity">
    <text evidence="4">Belongs to the UvrB family.</text>
</comment>
<dbReference type="PDB" id="1D9X">
    <property type="method" value="X-ray"/>
    <property type="resolution" value="2.60 A"/>
    <property type="chains" value="A=2-658"/>
</dbReference>
<dbReference type="PDB" id="1D9Z">
    <property type="method" value="X-ray"/>
    <property type="resolution" value="3.15 A"/>
    <property type="chains" value="A=2-658"/>
</dbReference>
<dbReference type="PDB" id="1T5L">
    <property type="method" value="X-ray"/>
    <property type="resolution" value="2.60 A"/>
    <property type="chains" value="A/B=2-658"/>
</dbReference>
<dbReference type="PDB" id="2FDC">
    <property type="method" value="X-ray"/>
    <property type="resolution" value="3.30 A"/>
    <property type="chains" value="A/B=2-658"/>
</dbReference>
<dbReference type="PDB" id="6O8E">
    <property type="method" value="X-ray"/>
    <property type="resolution" value="2.61 A"/>
    <property type="chains" value="A/B=2-593"/>
</dbReference>
<dbReference type="PDB" id="6O8F">
    <property type="method" value="X-ray"/>
    <property type="resolution" value="2.81 A"/>
    <property type="chains" value="A/B=2-593"/>
</dbReference>
<dbReference type="PDB" id="6O8G">
    <property type="method" value="X-ray"/>
    <property type="resolution" value="2.64 A"/>
    <property type="chains" value="A/B/C=2-593"/>
</dbReference>
<dbReference type="PDB" id="6O8H">
    <property type="method" value="X-ray"/>
    <property type="resolution" value="2.39 A"/>
    <property type="chains" value="A=2-593"/>
</dbReference>
<dbReference type="PDBsum" id="1D9X"/>
<dbReference type="PDBsum" id="1D9Z"/>
<dbReference type="PDBsum" id="1T5L"/>
<dbReference type="PDBsum" id="2FDC"/>
<dbReference type="PDBsum" id="6O8E"/>
<dbReference type="PDBsum" id="6O8F"/>
<dbReference type="PDBsum" id="6O8G"/>
<dbReference type="PDBsum" id="6O8H"/>
<dbReference type="SMR" id="P56981"/>
<dbReference type="EvolutionaryTrace" id="P56981"/>
<dbReference type="GO" id="GO:0005737">
    <property type="term" value="C:cytoplasm"/>
    <property type="evidence" value="ECO:0007669"/>
    <property type="project" value="UniProtKB-SubCell"/>
</dbReference>
<dbReference type="GO" id="GO:0009380">
    <property type="term" value="C:excinuclease repair complex"/>
    <property type="evidence" value="ECO:0007669"/>
    <property type="project" value="InterPro"/>
</dbReference>
<dbReference type="GO" id="GO:0005524">
    <property type="term" value="F:ATP binding"/>
    <property type="evidence" value="ECO:0007669"/>
    <property type="project" value="UniProtKB-UniRule"/>
</dbReference>
<dbReference type="GO" id="GO:0016887">
    <property type="term" value="F:ATP hydrolysis activity"/>
    <property type="evidence" value="ECO:0007669"/>
    <property type="project" value="InterPro"/>
</dbReference>
<dbReference type="GO" id="GO:0003677">
    <property type="term" value="F:DNA binding"/>
    <property type="evidence" value="ECO:0007669"/>
    <property type="project" value="UniProtKB-UniRule"/>
</dbReference>
<dbReference type="GO" id="GO:0009381">
    <property type="term" value="F:excinuclease ABC activity"/>
    <property type="evidence" value="ECO:0007669"/>
    <property type="project" value="UniProtKB-UniRule"/>
</dbReference>
<dbReference type="GO" id="GO:0006289">
    <property type="term" value="P:nucleotide-excision repair"/>
    <property type="evidence" value="ECO:0007669"/>
    <property type="project" value="UniProtKB-UniRule"/>
</dbReference>
<dbReference type="GO" id="GO:0009432">
    <property type="term" value="P:SOS response"/>
    <property type="evidence" value="ECO:0007669"/>
    <property type="project" value="UniProtKB-UniRule"/>
</dbReference>
<dbReference type="CDD" id="cd17916">
    <property type="entry name" value="DEXHc_UvrB"/>
    <property type="match status" value="1"/>
</dbReference>
<dbReference type="CDD" id="cd18790">
    <property type="entry name" value="SF2_C_UvrB"/>
    <property type="match status" value="1"/>
</dbReference>
<dbReference type="Gene3D" id="3.40.50.300">
    <property type="entry name" value="P-loop containing nucleotide triphosphate hydrolases"/>
    <property type="match status" value="3"/>
</dbReference>
<dbReference type="Gene3D" id="4.10.860.10">
    <property type="entry name" value="UVR domain"/>
    <property type="match status" value="1"/>
</dbReference>
<dbReference type="HAMAP" id="MF_00204">
    <property type="entry name" value="UvrB"/>
    <property type="match status" value="1"/>
</dbReference>
<dbReference type="InterPro" id="IPR006935">
    <property type="entry name" value="Helicase/UvrB_N"/>
</dbReference>
<dbReference type="InterPro" id="IPR014001">
    <property type="entry name" value="Helicase_ATP-bd"/>
</dbReference>
<dbReference type="InterPro" id="IPR001650">
    <property type="entry name" value="Helicase_C-like"/>
</dbReference>
<dbReference type="InterPro" id="IPR027417">
    <property type="entry name" value="P-loop_NTPase"/>
</dbReference>
<dbReference type="InterPro" id="IPR001943">
    <property type="entry name" value="UVR_dom"/>
</dbReference>
<dbReference type="InterPro" id="IPR036876">
    <property type="entry name" value="UVR_dom_sf"/>
</dbReference>
<dbReference type="InterPro" id="IPR004807">
    <property type="entry name" value="UvrB"/>
</dbReference>
<dbReference type="InterPro" id="IPR041471">
    <property type="entry name" value="UvrB_inter"/>
</dbReference>
<dbReference type="InterPro" id="IPR024759">
    <property type="entry name" value="UvrB_YAD/RRR_dom"/>
</dbReference>
<dbReference type="NCBIfam" id="NF003673">
    <property type="entry name" value="PRK05298.1"/>
    <property type="match status" value="1"/>
</dbReference>
<dbReference type="NCBIfam" id="TIGR00631">
    <property type="entry name" value="uvrb"/>
    <property type="match status" value="1"/>
</dbReference>
<dbReference type="PANTHER" id="PTHR24029">
    <property type="entry name" value="UVRABC SYSTEM PROTEIN B"/>
    <property type="match status" value="1"/>
</dbReference>
<dbReference type="PANTHER" id="PTHR24029:SF0">
    <property type="entry name" value="UVRABC SYSTEM PROTEIN B"/>
    <property type="match status" value="1"/>
</dbReference>
<dbReference type="Pfam" id="PF00271">
    <property type="entry name" value="Helicase_C"/>
    <property type="match status" value="1"/>
</dbReference>
<dbReference type="Pfam" id="PF04851">
    <property type="entry name" value="ResIII"/>
    <property type="match status" value="1"/>
</dbReference>
<dbReference type="Pfam" id="PF02151">
    <property type="entry name" value="UVR"/>
    <property type="match status" value="1"/>
</dbReference>
<dbReference type="Pfam" id="PF12344">
    <property type="entry name" value="UvrB"/>
    <property type="match status" value="1"/>
</dbReference>
<dbReference type="Pfam" id="PF17757">
    <property type="entry name" value="UvrB_inter"/>
    <property type="match status" value="1"/>
</dbReference>
<dbReference type="SMART" id="SM00487">
    <property type="entry name" value="DEXDc"/>
    <property type="match status" value="1"/>
</dbReference>
<dbReference type="SMART" id="SM00490">
    <property type="entry name" value="HELICc"/>
    <property type="match status" value="1"/>
</dbReference>
<dbReference type="SUPFAM" id="SSF46600">
    <property type="entry name" value="C-terminal UvrC-binding domain of UvrB"/>
    <property type="match status" value="1"/>
</dbReference>
<dbReference type="SUPFAM" id="SSF52540">
    <property type="entry name" value="P-loop containing nucleoside triphosphate hydrolases"/>
    <property type="match status" value="2"/>
</dbReference>
<dbReference type="PROSITE" id="PS51192">
    <property type="entry name" value="HELICASE_ATP_BIND_1"/>
    <property type="match status" value="1"/>
</dbReference>
<dbReference type="PROSITE" id="PS51194">
    <property type="entry name" value="HELICASE_CTER"/>
    <property type="match status" value="1"/>
</dbReference>
<dbReference type="PROSITE" id="PS50151">
    <property type="entry name" value="UVR"/>
    <property type="match status" value="1"/>
</dbReference>
<proteinExistence type="evidence at protein level"/>
<accession>P56981</accession>
<organism>
    <name type="scientific">Bacillus caldotenax</name>
    <dbReference type="NCBI Taxonomy" id="1395"/>
    <lineage>
        <taxon>Bacteria</taxon>
        <taxon>Bacillati</taxon>
        <taxon>Bacillota</taxon>
        <taxon>Bacilli</taxon>
        <taxon>Bacillales</taxon>
        <taxon>Anoxybacillaceae</taxon>
        <taxon>Geobacillus</taxon>
        <taxon>Geobacillus thermoleovorans group</taxon>
    </lineage>
</organism>
<protein>
    <recommendedName>
        <fullName>UvrABC system protein B</fullName>
        <shortName>Protein UvrB</shortName>
    </recommendedName>
    <alternativeName>
        <fullName>Excinuclease ABC subunit B</fullName>
    </alternativeName>
</protein>